<accession>Q1JRP2</accession>
<evidence type="ECO:0000255" key="1"/>
<evidence type="ECO:0000255" key="2">
    <source>
        <dbReference type="PIRNR" id="PIRNR037941"/>
    </source>
</evidence>
<evidence type="ECO:0000255" key="3">
    <source>
        <dbReference type="PROSITE-ProRule" id="PRU00188"/>
    </source>
</evidence>
<evidence type="ECO:0000255" key="4">
    <source>
        <dbReference type="PROSITE-ProRule" id="PRU00274"/>
    </source>
</evidence>
<evidence type="ECO:0000255" key="5">
    <source>
        <dbReference type="PROSITE-ProRule" id="PRU00498"/>
    </source>
</evidence>
<evidence type="ECO:0000269" key="6">
    <source>
    </source>
</evidence>
<evidence type="ECO:0000303" key="7">
    <source>
    </source>
</evidence>
<evidence type="ECO:0000305" key="8"/>
<evidence type="ECO:0000305" key="9">
    <source>
    </source>
</evidence>
<evidence type="ECO:0000312" key="10">
    <source>
        <dbReference type="EMBL" id="AAI47158.1"/>
    </source>
</evidence>
<evidence type="ECO:0000312" key="11">
    <source>
        <dbReference type="EMBL" id="CAK18220.1"/>
    </source>
</evidence>
<evidence type="ECO:0000312" key="12">
    <source>
        <dbReference type="MGI" id="MGI:3521861"/>
    </source>
</evidence>
<evidence type="ECO:0000312" key="13">
    <source>
        <dbReference type="Proteomes" id="UP000000589"/>
    </source>
</evidence>
<comment type="function">
    <text evidence="6">Serine protease which has a preference for Arg or Lys in position P1 and uncharged residues in positions P2 and P3. Shows specificity towards FGF2 in vitro.</text>
</comment>
<comment type="biophysicochemical properties">
    <phDependence>
        <text evidence="6">Optimum pH is 8.</text>
    </phDependence>
</comment>
<comment type="subcellular location">
    <subcellularLocation>
        <location evidence="6">Cell membrane</location>
        <topology evidence="8">Single-pass type II membrane protein</topology>
    </subcellularLocation>
    <subcellularLocation>
        <location evidence="6">Cell projection</location>
        <location evidence="6">Dendrite</location>
    </subcellularLocation>
    <subcellularLocation>
        <location evidence="6">Perikaryon</location>
    </subcellularLocation>
</comment>
<comment type="tissue specificity">
    <text evidence="6">Expressed specifically in Purkinje neurons of the cerebellum (at protein level). Also detected in spinal cord.</text>
</comment>
<comment type="PTM">
    <text evidence="6">Proteolytically cleaved via an autocatalytic mechanism.</text>
</comment>
<comment type="similarity">
    <text evidence="4">Belongs to the peptidase S1 family.</text>
</comment>
<dbReference type="EC" id="3.4.21.-" evidence="2 6"/>
<dbReference type="EMBL" id="AM260217">
    <property type="protein sequence ID" value="CAK18220.1"/>
    <property type="molecule type" value="mRNA"/>
</dbReference>
<dbReference type="EMBL" id="AC100746">
    <property type="status" value="NOT_ANNOTATED_CDS"/>
    <property type="molecule type" value="Genomic_DNA"/>
</dbReference>
<dbReference type="EMBL" id="BC147157">
    <property type="protein sequence ID" value="AAI47158.1"/>
    <property type="molecule type" value="mRNA"/>
</dbReference>
<dbReference type="EMBL" id="BC147158">
    <property type="protein sequence ID" value="AAI47159.1"/>
    <property type="molecule type" value="mRNA"/>
</dbReference>
<dbReference type="CCDS" id="CCDS19380.1"/>
<dbReference type="RefSeq" id="NP_001025468.1">
    <property type="nucleotide sequence ID" value="NM_001030297.3"/>
</dbReference>
<dbReference type="SMR" id="Q1JRP2"/>
<dbReference type="FunCoup" id="Q1JRP2">
    <property type="interactions" value="24"/>
</dbReference>
<dbReference type="STRING" id="10090.ENSMUSP00000062915"/>
<dbReference type="MEROPS" id="S01.294"/>
<dbReference type="GlyCosmos" id="Q1JRP2">
    <property type="glycosylation" value="3 sites, No reported glycans"/>
</dbReference>
<dbReference type="GlyGen" id="Q1JRP2">
    <property type="glycosylation" value="3 sites"/>
</dbReference>
<dbReference type="iPTMnet" id="Q1JRP2"/>
<dbReference type="PhosphoSitePlus" id="Q1JRP2"/>
<dbReference type="PaxDb" id="10090-ENSMUSP00000062915"/>
<dbReference type="PeptideAtlas" id="Q1JRP2"/>
<dbReference type="DNASU" id="435845"/>
<dbReference type="Ensembl" id="ENSMUST00000059424.10">
    <property type="protein sequence ID" value="ENSMUSP00000062915.6"/>
    <property type="gene ID" value="ENSMUSG00000061184.9"/>
</dbReference>
<dbReference type="GeneID" id="435845"/>
<dbReference type="KEGG" id="mmu:435845"/>
<dbReference type="UCSC" id="uc008xxn.1">
    <property type="organism name" value="mouse"/>
</dbReference>
<dbReference type="AGR" id="MGI:3521861"/>
<dbReference type="CTD" id="435845"/>
<dbReference type="MGI" id="MGI:3521861">
    <property type="gene designation" value="Tmprss11c"/>
</dbReference>
<dbReference type="VEuPathDB" id="HostDB:ENSMUSG00000061184"/>
<dbReference type="eggNOG" id="KOG3627">
    <property type="taxonomic scope" value="Eukaryota"/>
</dbReference>
<dbReference type="GeneTree" id="ENSGT00940000163237"/>
<dbReference type="InParanoid" id="Q1JRP2"/>
<dbReference type="OMA" id="EPNTKMK"/>
<dbReference type="OrthoDB" id="9425590at2759"/>
<dbReference type="PhylomeDB" id="Q1JRP2"/>
<dbReference type="TreeFam" id="TF351684"/>
<dbReference type="BioGRID-ORCS" id="435845">
    <property type="hits" value="4 hits in 77 CRISPR screens"/>
</dbReference>
<dbReference type="PRO" id="PR:Q1JRP2"/>
<dbReference type="Proteomes" id="UP000000589">
    <property type="component" value="Chromosome 5"/>
</dbReference>
<dbReference type="RNAct" id="Q1JRP2">
    <property type="molecule type" value="protein"/>
</dbReference>
<dbReference type="Bgee" id="ENSMUSG00000061184">
    <property type="expression patterns" value="Expressed in lip and 1 other cell type or tissue"/>
</dbReference>
<dbReference type="ExpressionAtlas" id="Q1JRP2">
    <property type="expression patterns" value="baseline and differential"/>
</dbReference>
<dbReference type="GO" id="GO:0030425">
    <property type="term" value="C:dendrite"/>
    <property type="evidence" value="ECO:0000314"/>
    <property type="project" value="UniProtKB"/>
</dbReference>
<dbReference type="GO" id="GO:0005576">
    <property type="term" value="C:extracellular region"/>
    <property type="evidence" value="ECO:0007669"/>
    <property type="project" value="InterPro"/>
</dbReference>
<dbReference type="GO" id="GO:0043204">
    <property type="term" value="C:perikaryon"/>
    <property type="evidence" value="ECO:0000314"/>
    <property type="project" value="UniProtKB"/>
</dbReference>
<dbReference type="GO" id="GO:0005886">
    <property type="term" value="C:plasma membrane"/>
    <property type="evidence" value="ECO:0000314"/>
    <property type="project" value="UniProtKB"/>
</dbReference>
<dbReference type="GO" id="GO:0004252">
    <property type="term" value="F:serine-type endopeptidase activity"/>
    <property type="evidence" value="ECO:0000314"/>
    <property type="project" value="UniProtKB"/>
</dbReference>
<dbReference type="GO" id="GO:0006508">
    <property type="term" value="P:proteolysis"/>
    <property type="evidence" value="ECO:0000314"/>
    <property type="project" value="UniProtKB"/>
</dbReference>
<dbReference type="GO" id="GO:0097264">
    <property type="term" value="P:self proteolysis"/>
    <property type="evidence" value="ECO:0000314"/>
    <property type="project" value="UniProtKB"/>
</dbReference>
<dbReference type="CDD" id="cd00190">
    <property type="entry name" value="Tryp_SPc"/>
    <property type="match status" value="1"/>
</dbReference>
<dbReference type="FunFam" id="2.40.10.10:FF:000003">
    <property type="entry name" value="Transmembrane serine protease 3"/>
    <property type="match status" value="1"/>
</dbReference>
<dbReference type="Gene3D" id="3.30.70.960">
    <property type="entry name" value="SEA domain"/>
    <property type="match status" value="1"/>
</dbReference>
<dbReference type="Gene3D" id="2.40.10.10">
    <property type="entry name" value="Trypsin-like serine proteases"/>
    <property type="match status" value="2"/>
</dbReference>
<dbReference type="InterPro" id="IPR017329">
    <property type="entry name" value="Pept_S1A_HAT/DESC1"/>
</dbReference>
<dbReference type="InterPro" id="IPR009003">
    <property type="entry name" value="Peptidase_S1_PA"/>
</dbReference>
<dbReference type="InterPro" id="IPR043504">
    <property type="entry name" value="Peptidase_S1_PA_chymotrypsin"/>
</dbReference>
<dbReference type="InterPro" id="IPR001314">
    <property type="entry name" value="Peptidase_S1A"/>
</dbReference>
<dbReference type="InterPro" id="IPR000082">
    <property type="entry name" value="SEA_dom"/>
</dbReference>
<dbReference type="InterPro" id="IPR036364">
    <property type="entry name" value="SEA_dom_sf"/>
</dbReference>
<dbReference type="InterPro" id="IPR001254">
    <property type="entry name" value="Trypsin_dom"/>
</dbReference>
<dbReference type="InterPro" id="IPR018114">
    <property type="entry name" value="TRYPSIN_HIS"/>
</dbReference>
<dbReference type="InterPro" id="IPR033116">
    <property type="entry name" value="TRYPSIN_SER"/>
</dbReference>
<dbReference type="PANTHER" id="PTHR24252">
    <property type="entry name" value="ACROSIN-RELATED"/>
    <property type="match status" value="1"/>
</dbReference>
<dbReference type="PANTHER" id="PTHR24252:SF28">
    <property type="entry name" value="TRANSMEMBRANE PROTEASE SERINE 11C ISOFORM X1"/>
    <property type="match status" value="1"/>
</dbReference>
<dbReference type="Pfam" id="PF01390">
    <property type="entry name" value="SEA"/>
    <property type="match status" value="1"/>
</dbReference>
<dbReference type="Pfam" id="PF00089">
    <property type="entry name" value="Trypsin"/>
    <property type="match status" value="1"/>
</dbReference>
<dbReference type="PIRSF" id="PIRSF037941">
    <property type="entry name" value="TMPRSS11ABCDE"/>
    <property type="match status" value="1"/>
</dbReference>
<dbReference type="PRINTS" id="PR00722">
    <property type="entry name" value="CHYMOTRYPSIN"/>
</dbReference>
<dbReference type="SMART" id="SM00200">
    <property type="entry name" value="SEA"/>
    <property type="match status" value="1"/>
</dbReference>
<dbReference type="SMART" id="SM00020">
    <property type="entry name" value="Tryp_SPc"/>
    <property type="match status" value="1"/>
</dbReference>
<dbReference type="SUPFAM" id="SSF82671">
    <property type="entry name" value="SEA domain"/>
    <property type="match status" value="1"/>
</dbReference>
<dbReference type="SUPFAM" id="SSF50494">
    <property type="entry name" value="Trypsin-like serine proteases"/>
    <property type="match status" value="1"/>
</dbReference>
<dbReference type="PROSITE" id="PS50024">
    <property type="entry name" value="SEA"/>
    <property type="match status" value="1"/>
</dbReference>
<dbReference type="PROSITE" id="PS50240">
    <property type="entry name" value="TRYPSIN_DOM"/>
    <property type="match status" value="1"/>
</dbReference>
<dbReference type="PROSITE" id="PS00134">
    <property type="entry name" value="TRYPSIN_HIS"/>
    <property type="match status" value="1"/>
</dbReference>
<dbReference type="PROSITE" id="PS00135">
    <property type="entry name" value="TRYPSIN_SER"/>
    <property type="match status" value="1"/>
</dbReference>
<gene>
    <name evidence="12" type="primary">Tmprss11c</name>
</gene>
<name>TM11C_MOUSE</name>
<keyword id="KW-0068">Autocatalytic cleavage</keyword>
<keyword id="KW-1003">Cell membrane</keyword>
<keyword id="KW-0966">Cell projection</keyword>
<keyword id="KW-1015">Disulfide bond</keyword>
<keyword id="KW-0325">Glycoprotein</keyword>
<keyword id="KW-0378">Hydrolase</keyword>
<keyword id="KW-0472">Membrane</keyword>
<keyword id="KW-0645">Protease</keyword>
<keyword id="KW-1185">Reference proteome</keyword>
<keyword id="KW-0720">Serine protease</keyword>
<keyword id="KW-0735">Signal-anchor</keyword>
<keyword id="KW-0812">Transmembrane</keyword>
<keyword id="KW-1133">Transmembrane helix</keyword>
<keyword id="KW-0865">Zymogen</keyword>
<proteinExistence type="evidence at protein level"/>
<protein>
    <recommendedName>
        <fullName evidence="12">Transmembrane protease serine 11C</fullName>
        <ecNumber evidence="2 6">3.4.21.-</ecNumber>
    </recommendedName>
    <alternativeName>
        <fullName evidence="7">Neurobin</fullName>
    </alternativeName>
    <component>
        <recommendedName>
            <fullName evidence="8">Transmembrane protease serine 11C non-catalytic chain</fullName>
        </recommendedName>
    </component>
    <component>
        <recommendedName>
            <fullName evidence="8">Transmembrane protease serine 11C catalytic chain</fullName>
        </recommendedName>
    </component>
</protein>
<sequence>MARGQPRRSEEQWTALQNRTECKTKIKLTRCGKITLGILTAVLAAVLIGLIAYFAACGKDSFYYHVSFKVNNIDYDSKFAKPYSQEYMDLNKRIVSLMNETFHESKLRKQYVKAHTVQVSKAKGKVVIHAVLKFKACYRNNVEKYWESVETTLYQKLKGQTGLLIDSSSFKFSDIAMPIAEDLLNTCCGRRTIIHRGHKVAGGQDAEEGEWPWQASLQQNSVHRCGATLISNYWLITAAHCFIRAANPKDWKVSFGFLLSKPQAPRAVKNIIIHENYSYPAHDNDIAVVRLSSPVLYESNIRRACLPEATQKFPPNSDVVVTGWGTLKSDGDSPNILQKGKVKIIDNKTCNSGKAYGGMITPGMMCAGFLKGRVDACQGDSGGPLVSEDSKGIWFLAGIVSWGDECALPNKPGVYTRVTYYRDWITSKTGL</sequence>
<feature type="chain" id="PRO_0000436381" description="Transmembrane protease serine 11C non-catalytic chain" evidence="8">
    <location>
        <begin position="1"/>
        <end position="199"/>
    </location>
</feature>
<feature type="chain" id="PRO_0000436382" description="Transmembrane protease serine 11C catalytic chain" evidence="8">
    <location>
        <begin position="200"/>
        <end position="431"/>
    </location>
</feature>
<feature type="topological domain" description="Cytoplasmic" evidence="8">
    <location>
        <begin position="1"/>
        <end position="33"/>
    </location>
</feature>
<feature type="transmembrane region" description="Helical; Signal-anchor for type II membrane protein" evidence="1">
    <location>
        <begin position="34"/>
        <end position="54"/>
    </location>
</feature>
<feature type="topological domain" description="Extracellular" evidence="8">
    <location>
        <begin position="55"/>
        <end position="431"/>
    </location>
</feature>
<feature type="domain" description="SEA" evidence="3">
    <location>
        <begin position="60"/>
        <end position="177"/>
    </location>
</feature>
<feature type="domain" description="Peptidase S1" evidence="4">
    <location>
        <begin position="200"/>
        <end position="430"/>
    </location>
</feature>
<feature type="active site" description="Charge relay system" evidence="4">
    <location>
        <position position="240"/>
    </location>
</feature>
<feature type="active site" description="Charge relay system" evidence="4">
    <location>
        <position position="285"/>
    </location>
</feature>
<feature type="active site" description="Charge relay system" evidence="4 9">
    <location>
        <position position="381"/>
    </location>
</feature>
<feature type="site" description="Cleavage" evidence="9">
    <location>
        <begin position="199"/>
        <end position="200"/>
    </location>
</feature>
<feature type="glycosylation site" description="N-linked (GlcNAc...) asparagine" evidence="5">
    <location>
        <position position="99"/>
    </location>
</feature>
<feature type="glycosylation site" description="N-linked (GlcNAc...) asparagine" evidence="5">
    <location>
        <position position="276"/>
    </location>
</feature>
<feature type="glycosylation site" description="N-linked (GlcNAc...) asparagine" evidence="5">
    <location>
        <position position="347"/>
    </location>
</feature>
<feature type="disulfide bond" evidence="4">
    <location>
        <begin position="225"/>
        <end position="241"/>
    </location>
</feature>
<feature type="disulfide bond" evidence="4">
    <location>
        <begin position="350"/>
        <end position="366"/>
    </location>
</feature>
<feature type="disulfide bond" evidence="4">
    <location>
        <begin position="377"/>
        <end position="406"/>
    </location>
</feature>
<feature type="mutagenesis site" description="Strongly reduced autocatalytic cleavage; when associated with A-196 and A-199. Slightly reduced autocatalytic cleavage; when associated with A-196." evidence="6">
    <original>RR</original>
    <variation>AA</variation>
    <location>
        <begin position="190"/>
        <end position="191"/>
    </location>
</feature>
<feature type="mutagenesis site" description="Strongly reduced autocatalytic cleavage; when associated with A-199. Strongly reduced autocatalytic cleavage; when associated with A-199 and 190-A-A-191. Slightly reduced autocatalytic cleavage; when associated with 190-A-A-191." evidence="6">
    <original>R</original>
    <variation>A</variation>
    <location>
        <position position="196"/>
    </location>
</feature>
<feature type="mutagenesis site" description="Reduced autocatalytic cleavage. Strongly reduced autocatalytic cleavage; when associated with A-196. Strongly reduced autocatalytic cleavage; when associated with A-196 and 190-A-A-191." evidence="6">
    <original>K</original>
    <variation>A</variation>
    <location>
        <position position="199"/>
    </location>
</feature>
<feature type="mutagenesis site" description="Abolishes autocatalytic cleavage." evidence="6">
    <original>S</original>
    <variation>A</variation>
    <location>
        <position position="381"/>
    </location>
</feature>
<reference evidence="11" key="1">
    <citation type="journal article" date="2008" name="Biochem. J.">
        <title>Neurobin/TMPRSS11c, a novel type II transmembrane serine protease that cleaves fibroblast growth factor-2 in vitro.</title>
        <authorList>
            <person name="Stallmach R."/>
            <person name="Gloor S.M."/>
        </authorList>
    </citation>
    <scope>NUCLEOTIDE SEQUENCE [MRNA]</scope>
    <scope>FUNCTION</scope>
    <scope>BIOPHYSICOCHEMICAL PROPERTIES</scope>
    <scope>CATALYTIC ACTIVITY</scope>
    <scope>SUBCELLULAR LOCATION</scope>
    <scope>TISSUE SPECIFICITY</scope>
    <scope>PROTEOLYTIC CLEAVAGE</scope>
    <scope>MUTAGENESIS OF 190-ARG-ARG-191; ARG-196; LYS-199 AND SER-381</scope>
    <source>
        <strain evidence="11">C57BL/6J</strain>
        <tissue evidence="11">Spinal cord</tissue>
    </source>
</reference>
<reference evidence="13" key="2">
    <citation type="journal article" date="2009" name="PLoS Biol.">
        <title>Lineage-specific biology revealed by a finished genome assembly of the mouse.</title>
        <authorList>
            <person name="Church D.M."/>
            <person name="Goodstadt L."/>
            <person name="Hillier L.W."/>
            <person name="Zody M.C."/>
            <person name="Goldstein S."/>
            <person name="She X."/>
            <person name="Bult C.J."/>
            <person name="Agarwala R."/>
            <person name="Cherry J.L."/>
            <person name="DiCuccio M."/>
            <person name="Hlavina W."/>
            <person name="Kapustin Y."/>
            <person name="Meric P."/>
            <person name="Maglott D."/>
            <person name="Birtle Z."/>
            <person name="Marques A.C."/>
            <person name="Graves T."/>
            <person name="Zhou S."/>
            <person name="Teague B."/>
            <person name="Potamousis K."/>
            <person name="Churas C."/>
            <person name="Place M."/>
            <person name="Herschleb J."/>
            <person name="Runnheim R."/>
            <person name="Forrest D."/>
            <person name="Amos-Landgraf J."/>
            <person name="Schwartz D.C."/>
            <person name="Cheng Z."/>
            <person name="Lindblad-Toh K."/>
            <person name="Eichler E.E."/>
            <person name="Ponting C.P."/>
        </authorList>
    </citation>
    <scope>NUCLEOTIDE SEQUENCE [LARGE SCALE GENOMIC DNA]</scope>
    <source>
        <strain>C57BL/6J</strain>
    </source>
</reference>
<reference evidence="10" key="3">
    <citation type="journal article" date="2004" name="Genome Res.">
        <title>The status, quality, and expansion of the NIH full-length cDNA project: the Mammalian Gene Collection (MGC).</title>
        <authorList>
            <consortium name="The MGC Project Team"/>
        </authorList>
    </citation>
    <scope>NUCLEOTIDE SEQUENCE [LARGE SCALE MRNA]</scope>
</reference>
<organism>
    <name type="scientific">Mus musculus</name>
    <name type="common">Mouse</name>
    <dbReference type="NCBI Taxonomy" id="10090"/>
    <lineage>
        <taxon>Eukaryota</taxon>
        <taxon>Metazoa</taxon>
        <taxon>Chordata</taxon>
        <taxon>Craniata</taxon>
        <taxon>Vertebrata</taxon>
        <taxon>Euteleostomi</taxon>
        <taxon>Mammalia</taxon>
        <taxon>Eutheria</taxon>
        <taxon>Euarchontoglires</taxon>
        <taxon>Glires</taxon>
        <taxon>Rodentia</taxon>
        <taxon>Myomorpha</taxon>
        <taxon>Muroidea</taxon>
        <taxon>Muridae</taxon>
        <taxon>Murinae</taxon>
        <taxon>Mus</taxon>
        <taxon>Mus</taxon>
    </lineage>
</organism>